<organism>
    <name type="scientific">Clostridium botulinum (strain Alaska E43 / Type E3)</name>
    <dbReference type="NCBI Taxonomy" id="508767"/>
    <lineage>
        <taxon>Bacteria</taxon>
        <taxon>Bacillati</taxon>
        <taxon>Bacillota</taxon>
        <taxon>Clostridia</taxon>
        <taxon>Eubacteriales</taxon>
        <taxon>Clostridiaceae</taxon>
        <taxon>Clostridium</taxon>
    </lineage>
</organism>
<protein>
    <recommendedName>
        <fullName evidence="1">V-type proton ATPase subunit E</fullName>
    </recommendedName>
    <alternativeName>
        <fullName evidence="1">V-ATPase subunit E</fullName>
    </alternativeName>
</protein>
<dbReference type="EMBL" id="CP001078">
    <property type="protein sequence ID" value="ACD52604.1"/>
    <property type="molecule type" value="Genomic_DNA"/>
</dbReference>
<dbReference type="RefSeq" id="WP_012450715.1">
    <property type="nucleotide sequence ID" value="NC_010723.1"/>
</dbReference>
<dbReference type="SMR" id="B2UWY7"/>
<dbReference type="KEGG" id="cbt:CLH_2592"/>
<dbReference type="HOGENOM" id="CLU_105846_0_0_9"/>
<dbReference type="GO" id="GO:0033178">
    <property type="term" value="C:proton-transporting two-sector ATPase complex, catalytic domain"/>
    <property type="evidence" value="ECO:0007669"/>
    <property type="project" value="InterPro"/>
</dbReference>
<dbReference type="GO" id="GO:0005524">
    <property type="term" value="F:ATP binding"/>
    <property type="evidence" value="ECO:0007669"/>
    <property type="project" value="UniProtKB-UniRule"/>
</dbReference>
<dbReference type="GO" id="GO:0046933">
    <property type="term" value="F:proton-transporting ATP synthase activity, rotational mechanism"/>
    <property type="evidence" value="ECO:0007669"/>
    <property type="project" value="UniProtKB-UniRule"/>
</dbReference>
<dbReference type="GO" id="GO:0046961">
    <property type="term" value="F:proton-transporting ATPase activity, rotational mechanism"/>
    <property type="evidence" value="ECO:0007669"/>
    <property type="project" value="InterPro"/>
</dbReference>
<dbReference type="GO" id="GO:0042777">
    <property type="term" value="P:proton motive force-driven plasma membrane ATP synthesis"/>
    <property type="evidence" value="ECO:0007669"/>
    <property type="project" value="UniProtKB-UniRule"/>
</dbReference>
<dbReference type="Gene3D" id="1.20.5.620">
    <property type="entry name" value="F1F0 ATP synthase subunit B, membrane domain"/>
    <property type="match status" value="1"/>
</dbReference>
<dbReference type="HAMAP" id="MF_00311">
    <property type="entry name" value="ATP_synth_E_arch"/>
    <property type="match status" value="1"/>
</dbReference>
<dbReference type="InterPro" id="IPR002842">
    <property type="entry name" value="ATPase_V1_Esu"/>
</dbReference>
<dbReference type="Pfam" id="PF01991">
    <property type="entry name" value="vATP-synt_E"/>
    <property type="match status" value="1"/>
</dbReference>
<dbReference type="SUPFAM" id="SSF160527">
    <property type="entry name" value="V-type ATPase subunit E-like"/>
    <property type="match status" value="1"/>
</dbReference>
<name>VATE_CLOBA</name>
<keyword id="KW-0066">ATP synthesis</keyword>
<keyword id="KW-0375">Hydrogen ion transport</keyword>
<keyword id="KW-0406">Ion transport</keyword>
<keyword id="KW-0813">Transport</keyword>
<accession>B2UWY7</accession>
<feature type="chain" id="PRO_1000115673" description="V-type proton ATPase subunit E">
    <location>
        <begin position="1"/>
        <end position="196"/>
    </location>
</feature>
<evidence type="ECO:0000255" key="1">
    <source>
        <dbReference type="HAMAP-Rule" id="MF_00311"/>
    </source>
</evidence>
<gene>
    <name evidence="1" type="primary">atpE</name>
    <name type="ordered locus">CLH_2592</name>
</gene>
<comment type="function">
    <text evidence="1">Produces ATP from ADP in the presence of a proton gradient across the membrane.</text>
</comment>
<comment type="similarity">
    <text evidence="1">Belongs to the V-ATPase E subunit family.</text>
</comment>
<proteinExistence type="inferred from homology"/>
<sequence>MSNIDNLTSRIIKDAEDKKRIILSEAEEKKSKIIAKKQEKAASEEKIIIEKAETEAVAREERIISSAELQARNEKLKSKQTVISKVFETTIEELCNASSDDFKGFVKTVILNSTLAGDENLILNEQGKKMIDSDFVAELNREIGSKGNITLSDKTGNFKGGFILEKNGIEINNTFEALVSSLKDEMGLEVARVLFS</sequence>
<reference key="1">
    <citation type="submission" date="2008-05" db="EMBL/GenBank/DDBJ databases">
        <title>Complete genome sequence of Clostridium botulinum E3 str. Alaska E43.</title>
        <authorList>
            <person name="Brinkac L.M."/>
            <person name="Brown J.L."/>
            <person name="Bruce D."/>
            <person name="Detter C."/>
            <person name="Munk C."/>
            <person name="Smith L.A."/>
            <person name="Smith T.J."/>
            <person name="Sutton G."/>
            <person name="Brettin T.S."/>
        </authorList>
    </citation>
    <scope>NUCLEOTIDE SEQUENCE [LARGE SCALE GENOMIC DNA]</scope>
    <source>
        <strain>Alaska E43 / Type E3</strain>
    </source>
</reference>